<proteinExistence type="inferred from homology"/>
<sequence length="151" mass="16646">MTLERTFVAIKPDGVQRGLIAEILGRFETKGFKLVGLKQLTPSKELAEKHYGVHKDRPFFSGLVDFITSGPVVAMVWEGEGVIASARKLIGATKPLEAEPGTIRGDLAVNIGRNVIHGSDGSDTAVFEINLWFQENELVDWNPSDQAWRVE</sequence>
<name>NDK_PROM1</name>
<protein>
    <recommendedName>
        <fullName evidence="1">Nucleoside diphosphate kinase</fullName>
        <shortName evidence="1">NDK</shortName>
        <shortName evidence="1">NDP kinase</shortName>
        <ecNumber evidence="1">2.7.4.6</ecNumber>
    </recommendedName>
    <alternativeName>
        <fullName evidence="1">Nucleoside-2-P kinase</fullName>
    </alternativeName>
</protein>
<dbReference type="EC" id="2.7.4.6" evidence="1"/>
<dbReference type="EMBL" id="CP000553">
    <property type="protein sequence ID" value="ABM74624.1"/>
    <property type="molecule type" value="Genomic_DNA"/>
</dbReference>
<dbReference type="RefSeq" id="WP_011822862.1">
    <property type="nucleotide sequence ID" value="NC_008819.1"/>
</dbReference>
<dbReference type="SMR" id="A2BZG4"/>
<dbReference type="KEGG" id="pme:NATL1_00601"/>
<dbReference type="eggNOG" id="COG0105">
    <property type="taxonomic scope" value="Bacteria"/>
</dbReference>
<dbReference type="HOGENOM" id="CLU_060216_6_3_3"/>
<dbReference type="Proteomes" id="UP000002592">
    <property type="component" value="Chromosome"/>
</dbReference>
<dbReference type="GO" id="GO:0005737">
    <property type="term" value="C:cytoplasm"/>
    <property type="evidence" value="ECO:0007669"/>
    <property type="project" value="UniProtKB-SubCell"/>
</dbReference>
<dbReference type="GO" id="GO:0005524">
    <property type="term" value="F:ATP binding"/>
    <property type="evidence" value="ECO:0007669"/>
    <property type="project" value="UniProtKB-UniRule"/>
</dbReference>
<dbReference type="GO" id="GO:0046872">
    <property type="term" value="F:metal ion binding"/>
    <property type="evidence" value="ECO:0007669"/>
    <property type="project" value="UniProtKB-KW"/>
</dbReference>
<dbReference type="GO" id="GO:0004550">
    <property type="term" value="F:nucleoside diphosphate kinase activity"/>
    <property type="evidence" value="ECO:0007669"/>
    <property type="project" value="UniProtKB-UniRule"/>
</dbReference>
<dbReference type="GO" id="GO:0006241">
    <property type="term" value="P:CTP biosynthetic process"/>
    <property type="evidence" value="ECO:0007669"/>
    <property type="project" value="UniProtKB-UniRule"/>
</dbReference>
<dbReference type="GO" id="GO:0006183">
    <property type="term" value="P:GTP biosynthetic process"/>
    <property type="evidence" value="ECO:0007669"/>
    <property type="project" value="UniProtKB-UniRule"/>
</dbReference>
<dbReference type="GO" id="GO:0006228">
    <property type="term" value="P:UTP biosynthetic process"/>
    <property type="evidence" value="ECO:0007669"/>
    <property type="project" value="UniProtKB-UniRule"/>
</dbReference>
<dbReference type="CDD" id="cd04413">
    <property type="entry name" value="NDPk_I"/>
    <property type="match status" value="1"/>
</dbReference>
<dbReference type="FunFam" id="3.30.70.141:FF:000002">
    <property type="entry name" value="Nucleoside diphosphate kinase"/>
    <property type="match status" value="1"/>
</dbReference>
<dbReference type="Gene3D" id="3.30.70.141">
    <property type="entry name" value="Nucleoside diphosphate kinase-like domain"/>
    <property type="match status" value="1"/>
</dbReference>
<dbReference type="HAMAP" id="MF_00451">
    <property type="entry name" value="NDP_kinase"/>
    <property type="match status" value="1"/>
</dbReference>
<dbReference type="InterPro" id="IPR034907">
    <property type="entry name" value="NDK-like_dom"/>
</dbReference>
<dbReference type="InterPro" id="IPR036850">
    <property type="entry name" value="NDK-like_dom_sf"/>
</dbReference>
<dbReference type="InterPro" id="IPR001564">
    <property type="entry name" value="Nucleoside_diP_kinase"/>
</dbReference>
<dbReference type="NCBIfam" id="NF001908">
    <property type="entry name" value="PRK00668.1"/>
    <property type="match status" value="1"/>
</dbReference>
<dbReference type="PANTHER" id="PTHR11349">
    <property type="entry name" value="NUCLEOSIDE DIPHOSPHATE KINASE"/>
    <property type="match status" value="1"/>
</dbReference>
<dbReference type="Pfam" id="PF00334">
    <property type="entry name" value="NDK"/>
    <property type="match status" value="1"/>
</dbReference>
<dbReference type="PRINTS" id="PR01243">
    <property type="entry name" value="NUCDPKINASE"/>
</dbReference>
<dbReference type="SMART" id="SM00562">
    <property type="entry name" value="NDK"/>
    <property type="match status" value="1"/>
</dbReference>
<dbReference type="SUPFAM" id="SSF54919">
    <property type="entry name" value="Nucleoside diphosphate kinase, NDK"/>
    <property type="match status" value="1"/>
</dbReference>
<dbReference type="PROSITE" id="PS51374">
    <property type="entry name" value="NDPK_LIKE"/>
    <property type="match status" value="1"/>
</dbReference>
<keyword id="KW-0067">ATP-binding</keyword>
<keyword id="KW-0963">Cytoplasm</keyword>
<keyword id="KW-0418">Kinase</keyword>
<keyword id="KW-0460">Magnesium</keyword>
<keyword id="KW-0479">Metal-binding</keyword>
<keyword id="KW-0546">Nucleotide metabolism</keyword>
<keyword id="KW-0547">Nucleotide-binding</keyword>
<keyword id="KW-0597">Phosphoprotein</keyword>
<keyword id="KW-0808">Transferase</keyword>
<comment type="function">
    <text evidence="1">Major role in the synthesis of nucleoside triphosphates other than ATP. The ATP gamma phosphate is transferred to the NDP beta phosphate via a ping-pong mechanism, using a phosphorylated active-site intermediate.</text>
</comment>
<comment type="catalytic activity">
    <reaction evidence="1">
        <text>a 2'-deoxyribonucleoside 5'-diphosphate + ATP = a 2'-deoxyribonucleoside 5'-triphosphate + ADP</text>
        <dbReference type="Rhea" id="RHEA:44640"/>
        <dbReference type="ChEBI" id="CHEBI:30616"/>
        <dbReference type="ChEBI" id="CHEBI:61560"/>
        <dbReference type="ChEBI" id="CHEBI:73316"/>
        <dbReference type="ChEBI" id="CHEBI:456216"/>
        <dbReference type="EC" id="2.7.4.6"/>
    </reaction>
</comment>
<comment type="catalytic activity">
    <reaction evidence="1">
        <text>a ribonucleoside 5'-diphosphate + ATP = a ribonucleoside 5'-triphosphate + ADP</text>
        <dbReference type="Rhea" id="RHEA:18113"/>
        <dbReference type="ChEBI" id="CHEBI:30616"/>
        <dbReference type="ChEBI" id="CHEBI:57930"/>
        <dbReference type="ChEBI" id="CHEBI:61557"/>
        <dbReference type="ChEBI" id="CHEBI:456216"/>
        <dbReference type="EC" id="2.7.4.6"/>
    </reaction>
</comment>
<comment type="cofactor">
    <cofactor evidence="1">
        <name>Mg(2+)</name>
        <dbReference type="ChEBI" id="CHEBI:18420"/>
    </cofactor>
</comment>
<comment type="subunit">
    <text evidence="1">Homotetramer.</text>
</comment>
<comment type="subcellular location">
    <subcellularLocation>
        <location evidence="1">Cytoplasm</location>
    </subcellularLocation>
</comment>
<comment type="similarity">
    <text evidence="1">Belongs to the NDK family.</text>
</comment>
<accession>A2BZG4</accession>
<reference key="1">
    <citation type="journal article" date="2007" name="PLoS Genet.">
        <title>Patterns and implications of gene gain and loss in the evolution of Prochlorococcus.</title>
        <authorList>
            <person name="Kettler G.C."/>
            <person name="Martiny A.C."/>
            <person name="Huang K."/>
            <person name="Zucker J."/>
            <person name="Coleman M.L."/>
            <person name="Rodrigue S."/>
            <person name="Chen F."/>
            <person name="Lapidus A."/>
            <person name="Ferriera S."/>
            <person name="Johnson J."/>
            <person name="Steglich C."/>
            <person name="Church G.M."/>
            <person name="Richardson P."/>
            <person name="Chisholm S.W."/>
        </authorList>
    </citation>
    <scope>NUCLEOTIDE SEQUENCE [LARGE SCALE GENOMIC DNA]</scope>
    <source>
        <strain>NATL1A</strain>
    </source>
</reference>
<evidence type="ECO:0000255" key="1">
    <source>
        <dbReference type="HAMAP-Rule" id="MF_00451"/>
    </source>
</evidence>
<organism>
    <name type="scientific">Prochlorococcus marinus (strain NATL1A)</name>
    <dbReference type="NCBI Taxonomy" id="167555"/>
    <lineage>
        <taxon>Bacteria</taxon>
        <taxon>Bacillati</taxon>
        <taxon>Cyanobacteriota</taxon>
        <taxon>Cyanophyceae</taxon>
        <taxon>Synechococcales</taxon>
        <taxon>Prochlorococcaceae</taxon>
        <taxon>Prochlorococcus</taxon>
    </lineage>
</organism>
<feature type="chain" id="PRO_1000026270" description="Nucleoside diphosphate kinase">
    <location>
        <begin position="1"/>
        <end position="151"/>
    </location>
</feature>
<feature type="active site" description="Pros-phosphohistidine intermediate" evidence="1">
    <location>
        <position position="117"/>
    </location>
</feature>
<feature type="binding site" evidence="1">
    <location>
        <position position="11"/>
    </location>
    <ligand>
        <name>ATP</name>
        <dbReference type="ChEBI" id="CHEBI:30616"/>
    </ligand>
</feature>
<feature type="binding site" evidence="1">
    <location>
        <position position="59"/>
    </location>
    <ligand>
        <name>ATP</name>
        <dbReference type="ChEBI" id="CHEBI:30616"/>
    </ligand>
</feature>
<feature type="binding site" evidence="1">
    <location>
        <position position="87"/>
    </location>
    <ligand>
        <name>ATP</name>
        <dbReference type="ChEBI" id="CHEBI:30616"/>
    </ligand>
</feature>
<feature type="binding site" evidence="1">
    <location>
        <position position="93"/>
    </location>
    <ligand>
        <name>ATP</name>
        <dbReference type="ChEBI" id="CHEBI:30616"/>
    </ligand>
</feature>
<feature type="binding site" evidence="1">
    <location>
        <position position="104"/>
    </location>
    <ligand>
        <name>ATP</name>
        <dbReference type="ChEBI" id="CHEBI:30616"/>
    </ligand>
</feature>
<feature type="binding site" evidence="1">
    <location>
        <position position="114"/>
    </location>
    <ligand>
        <name>ATP</name>
        <dbReference type="ChEBI" id="CHEBI:30616"/>
    </ligand>
</feature>
<gene>
    <name evidence="1" type="primary">ndk</name>
    <name type="ordered locus">NATL1_00601</name>
</gene>